<feature type="chain" id="PRO_0000084940" description="Catalase">
    <location>
        <begin position="1"/>
        <end position="492"/>
    </location>
</feature>
<feature type="active site" evidence="4">
    <location>
        <position position="65"/>
    </location>
</feature>
<feature type="active site" evidence="4">
    <location>
        <position position="138"/>
    </location>
</feature>
<feature type="binding site" description="axial binding residue" evidence="2">
    <location>
        <position position="348"/>
    </location>
    <ligand>
        <name>heme</name>
        <dbReference type="ChEBI" id="CHEBI:30413"/>
    </ligand>
    <ligandPart>
        <name>Fe</name>
        <dbReference type="ChEBI" id="CHEBI:18248"/>
    </ligandPart>
</feature>
<evidence type="ECO:0000250" key="1"/>
<evidence type="ECO:0000250" key="2">
    <source>
        <dbReference type="UniProtKB" id="P04040"/>
    </source>
</evidence>
<evidence type="ECO:0000250" key="3">
    <source>
        <dbReference type="UniProtKB" id="P25819"/>
    </source>
</evidence>
<evidence type="ECO:0000255" key="4">
    <source>
        <dbReference type="PROSITE-ProRule" id="PRU10013"/>
    </source>
</evidence>
<evidence type="ECO:0000305" key="5"/>
<name>CATA_HELAN</name>
<keyword id="KW-0963">Cytoplasm</keyword>
<keyword id="KW-0349">Heme</keyword>
<keyword id="KW-0376">Hydrogen peroxide</keyword>
<keyword id="KW-0408">Iron</keyword>
<keyword id="KW-0479">Metal-binding</keyword>
<keyword id="KW-0560">Oxidoreductase</keyword>
<keyword id="KW-0575">Peroxidase</keyword>
<keyword id="KW-0576">Peroxisome</keyword>
<comment type="function">
    <text evidence="2">Catalyzes the degradation of hydrogen peroxide (H(2)O(2)) generated by peroxisomal oxidases to water and oxygen, thereby protecting cells from the toxic effects of hydrogen peroxide.</text>
</comment>
<comment type="catalytic activity">
    <reaction evidence="4">
        <text>2 H2O2 = O2 + 2 H2O</text>
        <dbReference type="Rhea" id="RHEA:20309"/>
        <dbReference type="ChEBI" id="CHEBI:15377"/>
        <dbReference type="ChEBI" id="CHEBI:15379"/>
        <dbReference type="ChEBI" id="CHEBI:16240"/>
        <dbReference type="EC" id="1.11.1.6"/>
    </reaction>
</comment>
<comment type="cofactor">
    <cofactor evidence="2">
        <name>heme</name>
        <dbReference type="ChEBI" id="CHEBI:30413"/>
    </cofactor>
</comment>
<comment type="subunit">
    <text evidence="1">Homotetramer.</text>
</comment>
<comment type="subcellular location">
    <subcellularLocation>
        <location evidence="3">Cytoplasm</location>
        <location evidence="3">Cytosol</location>
    </subcellularLocation>
    <subcellularLocation>
        <location evidence="3">Peroxisome matrix</location>
    </subcellularLocation>
</comment>
<comment type="similarity">
    <text evidence="5">Belongs to the catalase family.</text>
</comment>
<proteinExistence type="evidence at transcript level"/>
<accession>P45739</accession>
<dbReference type="EC" id="1.11.1.6" evidence="4"/>
<dbReference type="EMBL" id="L28740">
    <property type="protein sequence ID" value="AAA69866.1"/>
    <property type="molecule type" value="mRNA"/>
</dbReference>
<dbReference type="PIR" id="S52079">
    <property type="entry name" value="S52079"/>
</dbReference>
<dbReference type="RefSeq" id="NP_001415290.1">
    <property type="nucleotide sequence ID" value="NM_001428361.1"/>
</dbReference>
<dbReference type="SMR" id="P45739"/>
<dbReference type="PeroxiBase" id="4087">
    <property type="entry name" value="HaKat01"/>
</dbReference>
<dbReference type="EnsemblPlants" id="mRNA:HanXRQr2_Chr08g0327621">
    <property type="protein sequence ID" value="mRNA:HanXRQr2_Chr08g0327621"/>
    <property type="gene ID" value="HanXRQr2_Chr08g0327621"/>
</dbReference>
<dbReference type="GeneID" id="110872274"/>
<dbReference type="Gramene" id="mRNA:HanXRQr2_Chr08g0327621">
    <property type="protein sequence ID" value="mRNA:HanXRQr2_Chr08g0327621"/>
    <property type="gene ID" value="HanXRQr2_Chr08g0327621"/>
</dbReference>
<dbReference type="OMA" id="FYNQGAR"/>
<dbReference type="OrthoDB" id="6880011at2759"/>
<dbReference type="GO" id="GO:0005829">
    <property type="term" value="C:cytosol"/>
    <property type="evidence" value="ECO:0007669"/>
    <property type="project" value="UniProtKB-SubCell"/>
</dbReference>
<dbReference type="GO" id="GO:0005782">
    <property type="term" value="C:peroxisomal matrix"/>
    <property type="evidence" value="ECO:0007669"/>
    <property type="project" value="UniProtKB-SubCell"/>
</dbReference>
<dbReference type="GO" id="GO:0004096">
    <property type="term" value="F:catalase activity"/>
    <property type="evidence" value="ECO:0007669"/>
    <property type="project" value="UniProtKB-EC"/>
</dbReference>
<dbReference type="GO" id="GO:0020037">
    <property type="term" value="F:heme binding"/>
    <property type="evidence" value="ECO:0007669"/>
    <property type="project" value="InterPro"/>
</dbReference>
<dbReference type="GO" id="GO:0046872">
    <property type="term" value="F:metal ion binding"/>
    <property type="evidence" value="ECO:0007669"/>
    <property type="project" value="UniProtKB-KW"/>
</dbReference>
<dbReference type="GO" id="GO:0042744">
    <property type="term" value="P:hydrogen peroxide catabolic process"/>
    <property type="evidence" value="ECO:0007669"/>
    <property type="project" value="UniProtKB-KW"/>
</dbReference>
<dbReference type="GO" id="GO:0006979">
    <property type="term" value="P:response to oxidative stress"/>
    <property type="evidence" value="ECO:0007669"/>
    <property type="project" value="InterPro"/>
</dbReference>
<dbReference type="CDD" id="cd08154">
    <property type="entry name" value="catalase_clade_1"/>
    <property type="match status" value="1"/>
</dbReference>
<dbReference type="FunFam" id="2.40.180.10:FF:000002">
    <property type="entry name" value="Catalase"/>
    <property type="match status" value="1"/>
</dbReference>
<dbReference type="Gene3D" id="2.40.180.10">
    <property type="entry name" value="Catalase core domain"/>
    <property type="match status" value="1"/>
</dbReference>
<dbReference type="InterPro" id="IPR018028">
    <property type="entry name" value="Catalase"/>
</dbReference>
<dbReference type="InterPro" id="IPR024708">
    <property type="entry name" value="Catalase_AS"/>
</dbReference>
<dbReference type="InterPro" id="IPR024711">
    <property type="entry name" value="Catalase_clade1/3"/>
</dbReference>
<dbReference type="InterPro" id="IPR011614">
    <property type="entry name" value="Catalase_core"/>
</dbReference>
<dbReference type="InterPro" id="IPR002226">
    <property type="entry name" value="Catalase_haem_BS"/>
</dbReference>
<dbReference type="InterPro" id="IPR010582">
    <property type="entry name" value="Catalase_immune_responsive"/>
</dbReference>
<dbReference type="InterPro" id="IPR020835">
    <property type="entry name" value="Catalase_sf"/>
</dbReference>
<dbReference type="PANTHER" id="PTHR11465">
    <property type="entry name" value="CATALASE"/>
    <property type="match status" value="1"/>
</dbReference>
<dbReference type="PANTHER" id="PTHR11465:SF23">
    <property type="entry name" value="CATALASE-2"/>
    <property type="match status" value="1"/>
</dbReference>
<dbReference type="Pfam" id="PF00199">
    <property type="entry name" value="Catalase"/>
    <property type="match status" value="1"/>
</dbReference>
<dbReference type="Pfam" id="PF06628">
    <property type="entry name" value="Catalase-rel"/>
    <property type="match status" value="1"/>
</dbReference>
<dbReference type="PIRSF" id="PIRSF038928">
    <property type="entry name" value="Catalase_clade1-3"/>
    <property type="match status" value="1"/>
</dbReference>
<dbReference type="PRINTS" id="PR00067">
    <property type="entry name" value="CATALASE"/>
</dbReference>
<dbReference type="SMART" id="SM01060">
    <property type="entry name" value="Catalase"/>
    <property type="match status" value="1"/>
</dbReference>
<dbReference type="SUPFAM" id="SSF56634">
    <property type="entry name" value="Heme-dependent catalase-like"/>
    <property type="match status" value="1"/>
</dbReference>
<dbReference type="PROSITE" id="PS00437">
    <property type="entry name" value="CATALASE_1"/>
    <property type="match status" value="1"/>
</dbReference>
<dbReference type="PROSITE" id="PS00438">
    <property type="entry name" value="CATALASE_2"/>
    <property type="match status" value="1"/>
</dbReference>
<dbReference type="PROSITE" id="PS51402">
    <property type="entry name" value="CATALASE_3"/>
    <property type="match status" value="1"/>
</dbReference>
<protein>
    <recommendedName>
        <fullName>Catalase</fullName>
        <ecNumber evidence="4">1.11.1.6</ecNumber>
    </recommendedName>
</protein>
<sequence length="492" mass="56755">MDPYKYRSSSAYNAPFWTTNSGAPVYNNNNSLTVGSRGPILLEDYHLVEKLANFDRERIPERVVHARGASAKGFFEVTHDITALTCADFLRAPGVQTPVIVRFSTVIHERGSPETLRDPRGFAVKFYTREGNFDLVGNNFPVFFIRDGMKFPDMVHSLKPNPKSHIQEDWRIMDFFSHHPESLHMFTFLLDDIGVPQDYRHMDGSGVNTYTLINKAGKAYYVKFHWKPTCGVKSLLEEEAIKIGGANHSHATQDLYDSIAAGNYPEWKLFIQTIDPDHEDRLDFDPLDVTKTWPEDIFPLQPVGRLVLNKNIDNFFAENEQLAFCPAIIVPGIYYSDDKLLQTRIFSYSDTQRHRLGPNYLQLPANAPKCAHHNNHYDGFMNFMHRDEEIDYFPSRYDPARHAEQYPIPPVRLSGKRDKCVIEKENNFKQPGERYRSFSPDRQERFINRVVGGLSDPRVTHEVRSIWVSYWSQADKSLGQKIASRLNVKPNY</sequence>
<organism>
    <name type="scientific">Helianthus annuus</name>
    <name type="common">Common sunflower</name>
    <dbReference type="NCBI Taxonomy" id="4232"/>
    <lineage>
        <taxon>Eukaryota</taxon>
        <taxon>Viridiplantae</taxon>
        <taxon>Streptophyta</taxon>
        <taxon>Embryophyta</taxon>
        <taxon>Tracheophyta</taxon>
        <taxon>Spermatophyta</taxon>
        <taxon>Magnoliopsida</taxon>
        <taxon>eudicotyledons</taxon>
        <taxon>Gunneridae</taxon>
        <taxon>Pentapetalae</taxon>
        <taxon>asterids</taxon>
        <taxon>campanulids</taxon>
        <taxon>Asterales</taxon>
        <taxon>Asteraceae</taxon>
        <taxon>Asteroideae</taxon>
        <taxon>Heliantheae alliance</taxon>
        <taxon>Heliantheae</taxon>
        <taxon>Helianthus</taxon>
    </lineage>
</organism>
<reference key="1">
    <citation type="journal article" date="1994" name="Biochim. Biophys. Acta">
        <title>Nucleotide and deduced amino acid sequence of a putative higher molecular weight precursor for catalase in sunflower cotyledons.</title>
        <authorList>
            <person name="Kleff S."/>
            <person name="Trelease R.N."/>
            <person name="Eising R."/>
        </authorList>
    </citation>
    <scope>NUCLEOTIDE SEQUENCE [MRNA]</scope>
    <source>
        <strain>cv. Spanners Allzweck</strain>
        <tissue>Cotyledon</tissue>
    </source>
</reference>